<protein>
    <recommendedName>
        <fullName evidence="3">Immunoglobulin kappa variable 5-48</fullName>
    </recommendedName>
    <alternativeName>
        <fullName evidence="2">Ig kappa chain V-V region L7</fullName>
    </alternativeName>
</protein>
<keyword id="KW-0002">3D-structure</keyword>
<keyword id="KW-1064">Adaptive immunity</keyword>
<keyword id="KW-1015">Disulfide bond</keyword>
<keyword id="KW-0391">Immunity</keyword>
<keyword id="KW-1280">Immunoglobulin</keyword>
<keyword id="KW-1185">Reference proteome</keyword>
<keyword id="KW-0732">Signal</keyword>
<comment type="miscellaneous">
    <text>There appears to be two possible splice junctions at the 3' end of the intron. The alternate would code for a protein lacking residues 17-19.</text>
</comment>
<gene>
    <name evidence="3" type="primary">Igkv5-48</name>
    <name evidence="3" type="synonym">Gm10881</name>
</gene>
<feature type="signal peptide">
    <location>
        <begin position="1"/>
        <end position="20"/>
    </location>
</feature>
<feature type="chain" id="PRO_0000015196" description="Immunoglobulin kappa variable 5-48">
    <location>
        <begin position="21"/>
        <end position="115" status="greater than"/>
    </location>
</feature>
<feature type="region of interest" description="Framework-1">
    <location>
        <begin position="21"/>
        <end position="43"/>
    </location>
</feature>
<feature type="region of interest" description="Complementarity-determining-1">
    <location>
        <begin position="44"/>
        <end position="54"/>
    </location>
</feature>
<feature type="region of interest" description="Framework-2">
    <location>
        <begin position="55"/>
        <end position="69"/>
    </location>
</feature>
<feature type="region of interest" description="Complementarity-determining-2">
    <location>
        <begin position="70"/>
        <end position="76"/>
    </location>
</feature>
<feature type="region of interest" description="Framework-3">
    <location>
        <begin position="77"/>
        <end position="108"/>
    </location>
</feature>
<feature type="region of interest" description="Complementarity-determining-3">
    <location>
        <begin position="109"/>
        <end position="115" status="greater than"/>
    </location>
</feature>
<feature type="disulfide bond" evidence="1">
    <location>
        <begin position="43"/>
        <end position="108"/>
    </location>
</feature>
<feature type="non-terminal residue">
    <location>
        <position position="115"/>
    </location>
</feature>
<feature type="strand" evidence="4">
    <location>
        <begin position="24"/>
        <end position="27"/>
    </location>
</feature>
<feature type="strand" evidence="4">
    <location>
        <begin position="29"/>
        <end position="33"/>
    </location>
</feature>
<feature type="strand" evidence="4">
    <location>
        <begin position="39"/>
        <end position="47"/>
    </location>
</feature>
<feature type="strand" evidence="4">
    <location>
        <begin position="53"/>
        <end position="58"/>
    </location>
</feature>
<feature type="strand" evidence="4">
    <location>
        <begin position="65"/>
        <end position="69"/>
    </location>
</feature>
<feature type="turn" evidence="4">
    <location>
        <begin position="70"/>
        <end position="72"/>
    </location>
</feature>
<feature type="strand" evidence="4">
    <location>
        <begin position="82"/>
        <end position="87"/>
    </location>
</feature>
<feature type="strand" evidence="4">
    <location>
        <begin position="90"/>
        <end position="97"/>
    </location>
</feature>
<feature type="helix" evidence="4">
    <location>
        <begin position="100"/>
        <end position="102"/>
    </location>
</feature>
<feature type="strand" evidence="4">
    <location>
        <begin position="104"/>
        <end position="110"/>
    </location>
</feature>
<feature type="strand" evidence="4">
    <location>
        <begin position="112"/>
        <end position="115"/>
    </location>
</feature>
<evidence type="ECO:0000255" key="1">
    <source>
        <dbReference type="PROSITE-ProRule" id="PRU00114"/>
    </source>
</evidence>
<evidence type="ECO:0000305" key="2"/>
<evidence type="ECO:0000312" key="3">
    <source>
        <dbReference type="MGI" id="MGI:3642817"/>
    </source>
</evidence>
<evidence type="ECO:0007829" key="4">
    <source>
        <dbReference type="PDB" id="1J1O"/>
    </source>
</evidence>
<accession>P01642</accession>
<reference key="1">
    <citation type="journal article" date="1981" name="Nature">
        <title>Differences between germ-line and rearranged immunoglobulin V kappa coding sequences suggest a localized mutation mechanism.</title>
        <authorList>
            <person name="Pech M."/>
            <person name="Hochtl J."/>
            <person name="Schnell H."/>
            <person name="Zachau H.G."/>
        </authorList>
    </citation>
    <scope>NUCLEOTIDE SEQUENCE</scope>
</reference>
<organism>
    <name type="scientific">Mus musculus</name>
    <name type="common">Mouse</name>
    <dbReference type="NCBI Taxonomy" id="10090"/>
    <lineage>
        <taxon>Eukaryota</taxon>
        <taxon>Metazoa</taxon>
        <taxon>Chordata</taxon>
        <taxon>Craniata</taxon>
        <taxon>Vertebrata</taxon>
        <taxon>Euteleostomi</taxon>
        <taxon>Mammalia</taxon>
        <taxon>Eutheria</taxon>
        <taxon>Euarchontoglires</taxon>
        <taxon>Glires</taxon>
        <taxon>Rodentia</taxon>
        <taxon>Myomorpha</taxon>
        <taxon>Muroidea</taxon>
        <taxon>Muridae</taxon>
        <taxon>Murinae</taxon>
        <taxon>Mus</taxon>
        <taxon>Mus</taxon>
    </lineage>
</organism>
<name>KV5A9_MOUSE</name>
<proteinExistence type="evidence at protein level"/>
<sequence>MVSTPQFLVFLLFWIPASRGDILLTQSPAILSVSPGERVSFSCRASQSIGTSIHWYQQRTNGSPRLLIKYASESISGIPSRFSGSGSGTDFTLSINSVESEDIADYYCQQSNSWP</sequence>
<dbReference type="PIR" id="A01925">
    <property type="entry name" value="KVMSL7"/>
</dbReference>
<dbReference type="PDB" id="1C08">
    <property type="method" value="X-ray"/>
    <property type="resolution" value="2.30 A"/>
    <property type="chains" value="A=21-115"/>
</dbReference>
<dbReference type="PDB" id="1IC4">
    <property type="method" value="X-ray"/>
    <property type="resolution" value="2.50 A"/>
    <property type="chains" value="L=21-115"/>
</dbReference>
<dbReference type="PDB" id="1IC5">
    <property type="method" value="X-ray"/>
    <property type="resolution" value="2.30 A"/>
    <property type="chains" value="L=21-115"/>
</dbReference>
<dbReference type="PDB" id="1IC7">
    <property type="method" value="X-ray"/>
    <property type="resolution" value="2.10 A"/>
    <property type="chains" value="L=21-115"/>
</dbReference>
<dbReference type="PDB" id="1J1O">
    <property type="method" value="X-ray"/>
    <property type="resolution" value="1.80 A"/>
    <property type="chains" value="L=21-115"/>
</dbReference>
<dbReference type="PDB" id="1J1P">
    <property type="method" value="X-ray"/>
    <property type="resolution" value="1.80 A"/>
    <property type="chains" value="L=21-115"/>
</dbReference>
<dbReference type="PDB" id="1J1X">
    <property type="method" value="X-ray"/>
    <property type="resolution" value="1.80 A"/>
    <property type="chains" value="L=21-115"/>
</dbReference>
<dbReference type="PDB" id="2OZ4">
    <property type="method" value="X-ray"/>
    <property type="resolution" value="2.70 A"/>
    <property type="chains" value="L=21-115"/>
</dbReference>
<dbReference type="PDB" id="4CKD">
    <property type="method" value="EM"/>
    <property type="resolution" value="13.00 A"/>
    <property type="chains" value="L/M/N/O=21-115"/>
</dbReference>
<dbReference type="PDBsum" id="1C08"/>
<dbReference type="PDBsum" id="1IC4"/>
<dbReference type="PDBsum" id="1IC5"/>
<dbReference type="PDBsum" id="1IC7"/>
<dbReference type="PDBsum" id="1J1O"/>
<dbReference type="PDBsum" id="1J1P"/>
<dbReference type="PDBsum" id="1J1X"/>
<dbReference type="PDBsum" id="2OZ4"/>
<dbReference type="PDBsum" id="4CKD"/>
<dbReference type="EMDB" id="EMD-22700"/>
<dbReference type="EMDB" id="EMD-22750"/>
<dbReference type="EMDB" id="EMD-22751"/>
<dbReference type="EMDB" id="EMD-35741"/>
<dbReference type="EMDB" id="EMD-35746"/>
<dbReference type="EMDB" id="EMD-37299"/>
<dbReference type="EMDB" id="EMD-60703"/>
<dbReference type="SMR" id="P01642"/>
<dbReference type="FunCoup" id="P01642">
    <property type="interactions" value="667"/>
</dbReference>
<dbReference type="CPTAC" id="non-CPTAC-3522"/>
<dbReference type="PeptideAtlas" id="P01642"/>
<dbReference type="Ensembl" id="ENSMUST00000103364.3">
    <property type="protein sequence ID" value="ENSMUSP00000100165.2"/>
    <property type="gene ID" value="ENSMUSG00000076563.3"/>
</dbReference>
<dbReference type="AGR" id="MGI:3642817"/>
<dbReference type="MGI" id="MGI:3642817">
    <property type="gene designation" value="Igkv5-48"/>
</dbReference>
<dbReference type="VEuPathDB" id="HostDB:ENSMUSG00000076563"/>
<dbReference type="GeneTree" id="ENSGT00940000163546"/>
<dbReference type="HOGENOM" id="CLU_077975_4_1_1"/>
<dbReference type="InParanoid" id="P01642"/>
<dbReference type="OMA" id="QSTHSYT"/>
<dbReference type="OrthoDB" id="9614656at2759"/>
<dbReference type="ChiTaRS" id="Igkv5-48">
    <property type="organism name" value="mouse"/>
</dbReference>
<dbReference type="EvolutionaryTrace" id="P01642"/>
<dbReference type="Proteomes" id="UP000000589">
    <property type="component" value="Chromosome 6"/>
</dbReference>
<dbReference type="RNAct" id="P01642">
    <property type="molecule type" value="protein"/>
</dbReference>
<dbReference type="Bgee" id="ENSMUSG00000076563">
    <property type="expression patterns" value="Expressed in jejunum and 22 other cell types or tissues"/>
</dbReference>
<dbReference type="GO" id="GO:0019814">
    <property type="term" value="C:immunoglobulin complex"/>
    <property type="evidence" value="ECO:0007669"/>
    <property type="project" value="UniProtKB-KW"/>
</dbReference>
<dbReference type="GO" id="GO:0002250">
    <property type="term" value="P:adaptive immune response"/>
    <property type="evidence" value="ECO:0007669"/>
    <property type="project" value="UniProtKB-KW"/>
</dbReference>
<dbReference type="FunFam" id="2.60.40.10:FF:000350">
    <property type="entry name" value="Immunoglobulin kappa chain variable 18-36"/>
    <property type="match status" value="1"/>
</dbReference>
<dbReference type="Gene3D" id="2.60.40.10">
    <property type="entry name" value="Immunoglobulins"/>
    <property type="match status" value="1"/>
</dbReference>
<dbReference type="InterPro" id="IPR007110">
    <property type="entry name" value="Ig-like_dom"/>
</dbReference>
<dbReference type="InterPro" id="IPR036179">
    <property type="entry name" value="Ig-like_dom_sf"/>
</dbReference>
<dbReference type="InterPro" id="IPR013783">
    <property type="entry name" value="Ig-like_fold"/>
</dbReference>
<dbReference type="InterPro" id="IPR003599">
    <property type="entry name" value="Ig_sub"/>
</dbReference>
<dbReference type="InterPro" id="IPR003598">
    <property type="entry name" value="Ig_sub2"/>
</dbReference>
<dbReference type="InterPro" id="IPR013106">
    <property type="entry name" value="Ig_V-set"/>
</dbReference>
<dbReference type="InterPro" id="IPR050150">
    <property type="entry name" value="IgV_Light_Chain"/>
</dbReference>
<dbReference type="PANTHER" id="PTHR23267">
    <property type="entry name" value="IMMUNOGLOBULIN LIGHT CHAIN"/>
    <property type="match status" value="1"/>
</dbReference>
<dbReference type="Pfam" id="PF07686">
    <property type="entry name" value="V-set"/>
    <property type="match status" value="1"/>
</dbReference>
<dbReference type="SMART" id="SM00409">
    <property type="entry name" value="IG"/>
    <property type="match status" value="1"/>
</dbReference>
<dbReference type="SMART" id="SM00408">
    <property type="entry name" value="IGc2"/>
    <property type="match status" value="1"/>
</dbReference>
<dbReference type="SMART" id="SM00406">
    <property type="entry name" value="IGv"/>
    <property type="match status" value="1"/>
</dbReference>
<dbReference type="SUPFAM" id="SSF48726">
    <property type="entry name" value="Immunoglobulin"/>
    <property type="match status" value="1"/>
</dbReference>
<dbReference type="PROSITE" id="PS50835">
    <property type="entry name" value="IG_LIKE"/>
    <property type="match status" value="1"/>
</dbReference>